<keyword id="KW-1185">Reference proteome</keyword>
<keyword id="KW-0687">Ribonucleoprotein</keyword>
<keyword id="KW-0689">Ribosomal protein</keyword>
<keyword id="KW-0694">RNA-binding</keyword>
<keyword id="KW-0699">rRNA-binding</keyword>
<gene>
    <name evidence="1" type="primary">rplN</name>
    <name type="ordered locus">ETA_31530</name>
</gene>
<accession>B2VK54</accession>
<comment type="function">
    <text evidence="1">Binds to 23S rRNA. Forms part of two intersubunit bridges in the 70S ribosome.</text>
</comment>
<comment type="subunit">
    <text evidence="1">Part of the 50S ribosomal subunit. Forms a cluster with proteins L3 and L19. In the 70S ribosome, L14 and L19 interact and together make contacts with the 16S rRNA in bridges B5 and B8.</text>
</comment>
<comment type="similarity">
    <text evidence="1">Belongs to the universal ribosomal protein uL14 family.</text>
</comment>
<name>RL14_ERWT9</name>
<dbReference type="EMBL" id="CU468135">
    <property type="protein sequence ID" value="CAO98199.1"/>
    <property type="molecule type" value="Genomic_DNA"/>
</dbReference>
<dbReference type="RefSeq" id="WP_004160583.1">
    <property type="nucleotide sequence ID" value="NC_010694.1"/>
</dbReference>
<dbReference type="SMR" id="B2VK54"/>
<dbReference type="STRING" id="465817.ETA_31530"/>
<dbReference type="GeneID" id="97604574"/>
<dbReference type="KEGG" id="eta:ETA_31530"/>
<dbReference type="eggNOG" id="COG0093">
    <property type="taxonomic scope" value="Bacteria"/>
</dbReference>
<dbReference type="HOGENOM" id="CLU_095071_2_1_6"/>
<dbReference type="OrthoDB" id="9806379at2"/>
<dbReference type="Proteomes" id="UP000001726">
    <property type="component" value="Chromosome"/>
</dbReference>
<dbReference type="GO" id="GO:0022625">
    <property type="term" value="C:cytosolic large ribosomal subunit"/>
    <property type="evidence" value="ECO:0007669"/>
    <property type="project" value="TreeGrafter"/>
</dbReference>
<dbReference type="GO" id="GO:0070180">
    <property type="term" value="F:large ribosomal subunit rRNA binding"/>
    <property type="evidence" value="ECO:0007669"/>
    <property type="project" value="TreeGrafter"/>
</dbReference>
<dbReference type="GO" id="GO:0003735">
    <property type="term" value="F:structural constituent of ribosome"/>
    <property type="evidence" value="ECO:0007669"/>
    <property type="project" value="InterPro"/>
</dbReference>
<dbReference type="GO" id="GO:0006412">
    <property type="term" value="P:translation"/>
    <property type="evidence" value="ECO:0007669"/>
    <property type="project" value="UniProtKB-UniRule"/>
</dbReference>
<dbReference type="CDD" id="cd00337">
    <property type="entry name" value="Ribosomal_uL14"/>
    <property type="match status" value="1"/>
</dbReference>
<dbReference type="FunFam" id="2.40.150.20:FF:000001">
    <property type="entry name" value="50S ribosomal protein L14"/>
    <property type="match status" value="1"/>
</dbReference>
<dbReference type="Gene3D" id="2.40.150.20">
    <property type="entry name" value="Ribosomal protein L14"/>
    <property type="match status" value="1"/>
</dbReference>
<dbReference type="HAMAP" id="MF_01367">
    <property type="entry name" value="Ribosomal_uL14"/>
    <property type="match status" value="1"/>
</dbReference>
<dbReference type="InterPro" id="IPR000218">
    <property type="entry name" value="Ribosomal_uL14"/>
</dbReference>
<dbReference type="InterPro" id="IPR005745">
    <property type="entry name" value="Ribosomal_uL14_bac-type"/>
</dbReference>
<dbReference type="InterPro" id="IPR019972">
    <property type="entry name" value="Ribosomal_uL14_CS"/>
</dbReference>
<dbReference type="InterPro" id="IPR036853">
    <property type="entry name" value="Ribosomal_uL14_sf"/>
</dbReference>
<dbReference type="NCBIfam" id="TIGR01067">
    <property type="entry name" value="rplN_bact"/>
    <property type="match status" value="1"/>
</dbReference>
<dbReference type="PANTHER" id="PTHR11761">
    <property type="entry name" value="50S/60S RIBOSOMAL PROTEIN L14/L23"/>
    <property type="match status" value="1"/>
</dbReference>
<dbReference type="PANTHER" id="PTHR11761:SF3">
    <property type="entry name" value="LARGE RIBOSOMAL SUBUNIT PROTEIN UL14M"/>
    <property type="match status" value="1"/>
</dbReference>
<dbReference type="Pfam" id="PF00238">
    <property type="entry name" value="Ribosomal_L14"/>
    <property type="match status" value="1"/>
</dbReference>
<dbReference type="SMART" id="SM01374">
    <property type="entry name" value="Ribosomal_L14"/>
    <property type="match status" value="1"/>
</dbReference>
<dbReference type="SUPFAM" id="SSF50193">
    <property type="entry name" value="Ribosomal protein L14"/>
    <property type="match status" value="1"/>
</dbReference>
<dbReference type="PROSITE" id="PS00049">
    <property type="entry name" value="RIBOSOMAL_L14"/>
    <property type="match status" value="1"/>
</dbReference>
<proteinExistence type="inferred from homology"/>
<organism>
    <name type="scientific">Erwinia tasmaniensis (strain DSM 17950 / CFBP 7177 / CIP 109463 / NCPPB 4357 / Et1/99)</name>
    <dbReference type="NCBI Taxonomy" id="465817"/>
    <lineage>
        <taxon>Bacteria</taxon>
        <taxon>Pseudomonadati</taxon>
        <taxon>Pseudomonadota</taxon>
        <taxon>Gammaproteobacteria</taxon>
        <taxon>Enterobacterales</taxon>
        <taxon>Erwiniaceae</taxon>
        <taxon>Erwinia</taxon>
    </lineage>
</organism>
<reference key="1">
    <citation type="journal article" date="2008" name="Environ. Microbiol.">
        <title>The genome of Erwinia tasmaniensis strain Et1/99, a non-pathogenic bacterium in the genus Erwinia.</title>
        <authorList>
            <person name="Kube M."/>
            <person name="Migdoll A.M."/>
            <person name="Mueller I."/>
            <person name="Kuhl H."/>
            <person name="Beck A."/>
            <person name="Reinhardt R."/>
            <person name="Geider K."/>
        </authorList>
    </citation>
    <scope>NUCLEOTIDE SEQUENCE [LARGE SCALE GENOMIC DNA]</scope>
    <source>
        <strain>DSM 17950 / CFBP 7177 / CIP 109463 / NCPPB 4357 / Et1/99</strain>
    </source>
</reference>
<feature type="chain" id="PRO_1000144271" description="Large ribosomal subunit protein uL14">
    <location>
        <begin position="1"/>
        <end position="123"/>
    </location>
</feature>
<protein>
    <recommendedName>
        <fullName evidence="1">Large ribosomal subunit protein uL14</fullName>
    </recommendedName>
    <alternativeName>
        <fullName evidence="2">50S ribosomal protein L14</fullName>
    </alternativeName>
</protein>
<sequence length="123" mass="13583">MIQEQTMLNVADNSGARRVMCIKVLGGSHRRYAGVGDIIKITIKEAIPRGKVKKGDVLKAVVVRTRKGVRRPDGSVIRFDGNACVILNNNSEQPIGTRIFGPVTRELRTEKFMKIISLAPEVL</sequence>
<evidence type="ECO:0000255" key="1">
    <source>
        <dbReference type="HAMAP-Rule" id="MF_01367"/>
    </source>
</evidence>
<evidence type="ECO:0000305" key="2"/>